<comment type="subcellular location">
    <subcellularLocation>
        <location evidence="2">Host cytoplasm</location>
    </subcellularLocation>
</comment>
<comment type="induction">
    <text evidence="1">Expressed in the late phase of the viral replicative cycle. Expression of late genes is activated by the viral late transcription activator C.</text>
</comment>
<name>GP35_BPMU</name>
<feature type="chain" id="PRO_0000077826" description="Uncharacterized protein gp35">
    <location>
        <begin position="1"/>
        <end position="136"/>
    </location>
</feature>
<organismHost>
    <name type="scientific">Enterobacteriaceae</name>
    <dbReference type="NCBI Taxonomy" id="543"/>
</organismHost>
<protein>
    <recommendedName>
        <fullName>Uncharacterized protein gp35</fullName>
    </recommendedName>
    <alternativeName>
        <fullName>Gene product 35</fullName>
        <shortName>gp35</shortName>
    </alternativeName>
</protein>
<keyword id="KW-1035">Host cytoplasm</keyword>
<keyword id="KW-0426">Late protein</keyword>
<keyword id="KW-1185">Reference proteome</keyword>
<evidence type="ECO:0000269" key="1">
    <source>
    </source>
</evidence>
<evidence type="ECO:0000305" key="2"/>
<dbReference type="EMBL" id="AF083977">
    <property type="protein sequence ID" value="AAF01113.1"/>
    <property type="molecule type" value="Genomic_DNA"/>
</dbReference>
<dbReference type="RefSeq" id="NP_050639.1">
    <property type="nucleotide sequence ID" value="NC_000929.1"/>
</dbReference>
<dbReference type="SMR" id="Q9T1W0"/>
<dbReference type="GeneID" id="2636251"/>
<dbReference type="KEGG" id="vg:2636251"/>
<dbReference type="Proteomes" id="UP000002611">
    <property type="component" value="Genome"/>
</dbReference>
<dbReference type="GO" id="GO:0030430">
    <property type="term" value="C:host cell cytoplasm"/>
    <property type="evidence" value="ECO:0007669"/>
    <property type="project" value="UniProtKB-SubCell"/>
</dbReference>
<dbReference type="Gene3D" id="3.40.5.80">
    <property type="match status" value="1"/>
</dbReference>
<dbReference type="InterPro" id="IPR041227">
    <property type="entry name" value="FluMu_N"/>
</dbReference>
<dbReference type="Pfam" id="PF17891">
    <property type="entry name" value="FluMu_N"/>
    <property type="match status" value="1"/>
</dbReference>
<dbReference type="SUPFAM" id="SSF160059">
    <property type="entry name" value="PriA/YqbF domain"/>
    <property type="match status" value="1"/>
</dbReference>
<proteinExistence type="evidence at transcript level"/>
<sequence>MSGTSLNSQRLDTSRITCTAIIKCLRPVYRRAGIAFTRGENTVEVTEEQLAIIRADSVLSVVSASSAETLAEAGGLDVLGVGDLNTRIRATVAGLDKANPEHFTAGGEPKVKAVSAALGEPVSSAQIKAALAEADA</sequence>
<reference key="1">
    <citation type="journal article" date="2002" name="J. Mol. Biol.">
        <title>Bacteriophage Mu genome sequence: analysis and comparison with Mu-like prophages in Haemophilus, Neisseria and Deinococcus.</title>
        <authorList>
            <person name="Morgan G.J."/>
            <person name="Hatfull G.F."/>
            <person name="Casjens S."/>
            <person name="Hendrix R.W."/>
        </authorList>
    </citation>
    <scope>NUCLEOTIDE SEQUENCE [LARGE SCALE GENOMIC DNA]</scope>
</reference>
<reference key="2">
    <citation type="journal article" date="1993" name="Genetics">
        <title>Mutational analysis of a C-dependent late promoter of bacteriophage Mu.</title>
        <authorList>
            <person name="Chiang L.W."/>
            <person name="Howe M.M."/>
        </authorList>
    </citation>
    <scope>INDUCTION</scope>
</reference>
<gene>
    <name type="ordered locus">Mup35</name>
</gene>
<organism>
    <name type="scientific">Escherichia phage Mu</name>
    <name type="common">Bacteriophage Mu</name>
    <dbReference type="NCBI Taxonomy" id="2681603"/>
    <lineage>
        <taxon>Viruses</taxon>
        <taxon>Duplodnaviria</taxon>
        <taxon>Heunggongvirae</taxon>
        <taxon>Uroviricota</taxon>
        <taxon>Caudoviricetes</taxon>
        <taxon>Muvirus</taxon>
        <taxon>Muvirus mu</taxon>
    </lineage>
</organism>
<accession>Q9T1W0</accession>